<organism>
    <name type="scientific">Salmonella paratyphi B (strain ATCC BAA-1250 / SPB7)</name>
    <dbReference type="NCBI Taxonomy" id="1016998"/>
    <lineage>
        <taxon>Bacteria</taxon>
        <taxon>Pseudomonadati</taxon>
        <taxon>Pseudomonadota</taxon>
        <taxon>Gammaproteobacteria</taxon>
        <taxon>Enterobacterales</taxon>
        <taxon>Enterobacteriaceae</taxon>
        <taxon>Salmonella</taxon>
    </lineage>
</organism>
<comment type="function">
    <text evidence="1">Located on the platform of the 30S subunit, it bridges several disparate RNA helices of the 16S rRNA. Forms part of the Shine-Dalgarno cleft in the 70S ribosome.</text>
</comment>
<comment type="subunit">
    <text evidence="1">Part of the 30S ribosomal subunit. Interacts with proteins S7 and S18. Binds to IF-3.</text>
</comment>
<comment type="similarity">
    <text evidence="1">Belongs to the universal ribosomal protein uS11 family.</text>
</comment>
<accession>A9N8C1</accession>
<reference key="1">
    <citation type="submission" date="2007-11" db="EMBL/GenBank/DDBJ databases">
        <authorList>
            <consortium name="The Salmonella enterica serovar Paratyphi B Genome Sequencing Project"/>
            <person name="McClelland M."/>
            <person name="Sanderson E.K."/>
            <person name="Porwollik S."/>
            <person name="Spieth J."/>
            <person name="Clifton W.S."/>
            <person name="Fulton R."/>
            <person name="Cordes M."/>
            <person name="Wollam A."/>
            <person name="Shah N."/>
            <person name="Pepin K."/>
            <person name="Bhonagiri V."/>
            <person name="Nash W."/>
            <person name="Johnson M."/>
            <person name="Thiruvilangam P."/>
            <person name="Wilson R."/>
        </authorList>
    </citation>
    <scope>NUCLEOTIDE SEQUENCE [LARGE SCALE GENOMIC DNA]</scope>
    <source>
        <strain>ATCC BAA-1250 / SPB7</strain>
    </source>
</reference>
<name>RS11_SALPB</name>
<evidence type="ECO:0000255" key="1">
    <source>
        <dbReference type="HAMAP-Rule" id="MF_01310"/>
    </source>
</evidence>
<evidence type="ECO:0000305" key="2"/>
<proteinExistence type="inferred from homology"/>
<feature type="chain" id="PRO_1000086208" description="Small ribosomal subunit protein uS11">
    <location>
        <begin position="1"/>
        <end position="129"/>
    </location>
</feature>
<gene>
    <name evidence="1" type="primary">rpsK</name>
    <name type="ordered locus">SPAB_04258</name>
</gene>
<protein>
    <recommendedName>
        <fullName evidence="1">Small ribosomal subunit protein uS11</fullName>
    </recommendedName>
    <alternativeName>
        <fullName evidence="2">30S ribosomal protein S11</fullName>
    </alternativeName>
</protein>
<dbReference type="EMBL" id="CP000886">
    <property type="protein sequence ID" value="ABX69575.1"/>
    <property type="molecule type" value="Genomic_DNA"/>
</dbReference>
<dbReference type="RefSeq" id="WP_001029758.1">
    <property type="nucleotide sequence ID" value="NC_010102.1"/>
</dbReference>
<dbReference type="SMR" id="A9N8C1"/>
<dbReference type="GeneID" id="98390419"/>
<dbReference type="KEGG" id="spq:SPAB_04258"/>
<dbReference type="PATRIC" id="fig|1016998.12.peg.4004"/>
<dbReference type="HOGENOM" id="CLU_072439_5_0_6"/>
<dbReference type="BioCyc" id="SENT1016998:SPAB_RS17320-MONOMER"/>
<dbReference type="Proteomes" id="UP000008556">
    <property type="component" value="Chromosome"/>
</dbReference>
<dbReference type="GO" id="GO:1990904">
    <property type="term" value="C:ribonucleoprotein complex"/>
    <property type="evidence" value="ECO:0007669"/>
    <property type="project" value="UniProtKB-KW"/>
</dbReference>
<dbReference type="GO" id="GO:0005840">
    <property type="term" value="C:ribosome"/>
    <property type="evidence" value="ECO:0007669"/>
    <property type="project" value="UniProtKB-KW"/>
</dbReference>
<dbReference type="GO" id="GO:0019843">
    <property type="term" value="F:rRNA binding"/>
    <property type="evidence" value="ECO:0007669"/>
    <property type="project" value="UniProtKB-UniRule"/>
</dbReference>
<dbReference type="GO" id="GO:0003735">
    <property type="term" value="F:structural constituent of ribosome"/>
    <property type="evidence" value="ECO:0007669"/>
    <property type="project" value="InterPro"/>
</dbReference>
<dbReference type="GO" id="GO:0006412">
    <property type="term" value="P:translation"/>
    <property type="evidence" value="ECO:0007669"/>
    <property type="project" value="UniProtKB-UniRule"/>
</dbReference>
<dbReference type="FunFam" id="3.30.420.80:FF:000001">
    <property type="entry name" value="30S ribosomal protein S11"/>
    <property type="match status" value="1"/>
</dbReference>
<dbReference type="Gene3D" id="3.30.420.80">
    <property type="entry name" value="Ribosomal protein S11"/>
    <property type="match status" value="1"/>
</dbReference>
<dbReference type="HAMAP" id="MF_01310">
    <property type="entry name" value="Ribosomal_uS11"/>
    <property type="match status" value="1"/>
</dbReference>
<dbReference type="InterPro" id="IPR001971">
    <property type="entry name" value="Ribosomal_uS11"/>
</dbReference>
<dbReference type="InterPro" id="IPR019981">
    <property type="entry name" value="Ribosomal_uS11_bac-type"/>
</dbReference>
<dbReference type="InterPro" id="IPR018102">
    <property type="entry name" value="Ribosomal_uS11_CS"/>
</dbReference>
<dbReference type="InterPro" id="IPR036967">
    <property type="entry name" value="Ribosomal_uS11_sf"/>
</dbReference>
<dbReference type="NCBIfam" id="NF003698">
    <property type="entry name" value="PRK05309.1"/>
    <property type="match status" value="1"/>
</dbReference>
<dbReference type="NCBIfam" id="TIGR03632">
    <property type="entry name" value="uS11_bact"/>
    <property type="match status" value="1"/>
</dbReference>
<dbReference type="PANTHER" id="PTHR11759">
    <property type="entry name" value="40S RIBOSOMAL PROTEIN S14/30S RIBOSOMAL PROTEIN S11"/>
    <property type="match status" value="1"/>
</dbReference>
<dbReference type="Pfam" id="PF00411">
    <property type="entry name" value="Ribosomal_S11"/>
    <property type="match status" value="1"/>
</dbReference>
<dbReference type="PIRSF" id="PIRSF002131">
    <property type="entry name" value="Ribosomal_S11"/>
    <property type="match status" value="1"/>
</dbReference>
<dbReference type="SUPFAM" id="SSF53137">
    <property type="entry name" value="Translational machinery components"/>
    <property type="match status" value="1"/>
</dbReference>
<dbReference type="PROSITE" id="PS00054">
    <property type="entry name" value="RIBOSOMAL_S11"/>
    <property type="match status" value="1"/>
</dbReference>
<keyword id="KW-0687">Ribonucleoprotein</keyword>
<keyword id="KW-0689">Ribosomal protein</keyword>
<keyword id="KW-0694">RNA-binding</keyword>
<keyword id="KW-0699">rRNA-binding</keyword>
<sequence length="129" mass="13831">MAKAPVRARKRVRKQVSDGVAHIHASFNNTIVTITDRQGNALGWATAGGSGFRGSRKSTPFAAQVAAERCADAVKEYGIKNLEVMVKGPGPGRESTIRALNAAGFRITNITDVTPIPHNGCRPPKKRRV</sequence>